<organism>
    <name type="scientific">Candida boidinii</name>
    <name type="common">Yeast</name>
    <dbReference type="NCBI Taxonomy" id="5477"/>
    <lineage>
        <taxon>Eukaryota</taxon>
        <taxon>Fungi</taxon>
        <taxon>Dikarya</taxon>
        <taxon>Ascomycota</taxon>
        <taxon>Saccharomycotina</taxon>
        <taxon>Pichiomycetes</taxon>
        <taxon>Pichiales</taxon>
        <taxon>Pichiaceae</taxon>
        <taxon>Ogataea</taxon>
        <taxon>Ogataea/Candida clade</taxon>
    </lineage>
</organism>
<evidence type="ECO:0000250" key="1"/>
<evidence type="ECO:0000269" key="2">
    <source>
    </source>
</evidence>
<evidence type="ECO:0000269" key="3">
    <source>
    </source>
</evidence>
<evidence type="ECO:0000269" key="4">
    <source>
    </source>
</evidence>
<evidence type="ECO:0000269" key="5">
    <source>
    </source>
</evidence>
<evidence type="ECO:0000269" key="6">
    <source>
    </source>
</evidence>
<evidence type="ECO:0000305" key="7"/>
<proteinExistence type="evidence at protein level"/>
<feature type="chain" id="PRO_0000407987" description="NADPH-dependent D-xylose reductase">
    <location>
        <begin position="1"/>
        <end position="321"/>
    </location>
</feature>
<feature type="active site" description="Proton donor" evidence="1">
    <location>
        <position position="50"/>
    </location>
</feature>
<feature type="binding site" evidence="1">
    <location>
        <position position="112"/>
    </location>
    <ligand>
        <name>substrate</name>
    </ligand>
</feature>
<feature type="binding site" evidence="1">
    <location>
        <begin position="167"/>
        <end position="168"/>
    </location>
    <ligand>
        <name>NADP(+)</name>
        <dbReference type="ChEBI" id="CHEBI:58349"/>
    </ligand>
</feature>
<feature type="binding site" evidence="1">
    <location>
        <begin position="216"/>
        <end position="225"/>
    </location>
    <ligand>
        <name>NADP(+)</name>
        <dbReference type="ChEBI" id="CHEBI:58349"/>
    </ligand>
</feature>
<feature type="binding site" evidence="1">
    <location>
        <begin position="272"/>
        <end position="282"/>
    </location>
    <ligand>
        <name>NADP(+)</name>
        <dbReference type="ChEBI" id="CHEBI:58349"/>
    </ligand>
</feature>
<feature type="site" description="Lowers pKa of active site Tyr" evidence="1">
    <location>
        <position position="79"/>
    </location>
</feature>
<feature type="mutagenesis site" description="Increases cofactor specificity for NADH over NADPH 240 times." evidence="6">
    <original>KSN</original>
    <variation>EDR</variation>
    <location>
        <begin position="272"/>
        <end position="274"/>
    </location>
</feature>
<feature type="mutagenesis site" description="Increases cofactor specificity for NADH over NADPH more than 1900 times." evidence="6">
    <original>KSN</original>
    <variation>EDR</variation>
    <location>
        <begin position="272"/>
        <end position="274"/>
    </location>
</feature>
<feature type="mutagenesis site" description="Increases cofactor specificity for NADH over NADPH 240 times." evidence="6">
    <original>KSN</original>
    <variation>EDS</variation>
    <location>
        <begin position="272"/>
        <end position="274"/>
    </location>
</feature>
<feature type="mutagenesis site" description="Increases cofactor specificity for NADH over NADPH 6 times." evidence="6">
    <original>KSN</original>
    <variation>EQR</variation>
    <location>
        <begin position="272"/>
        <end position="274"/>
    </location>
</feature>
<feature type="mutagenesis site" description="Increases cofactor specificity for NADH over NADPH 440 times." evidence="6">
    <original>KSN</original>
    <variation>GGD</variation>
    <location>
        <begin position="272"/>
        <end position="274"/>
    </location>
</feature>
<feature type="mutagenesis site" description="Increases cofactor specificity for NADH over NADPH more than 5400 times." evidence="6">
    <original>KSN</original>
    <variation>MAE</variation>
    <location>
        <begin position="272"/>
        <end position="274"/>
    </location>
</feature>
<feature type="mutagenesis site" description="Increases cofactor specificity for NADH over NADPH more than 1800 times." evidence="6">
    <original>KSN</original>
    <variation>MES</variation>
    <location>
        <begin position="272"/>
        <end position="274"/>
    </location>
</feature>
<feature type="mutagenesis site" description="Increases cofactor specificity for NADH over NADPH 890 times." evidence="6">
    <original>KSN</original>
    <variation>MGD</variation>
    <location>
        <begin position="272"/>
        <end position="274"/>
    </location>
</feature>
<feature type="mutagenesis site" description="Increases cofactor specificity for NADH over NADPH more than 11200 times." evidence="6">
    <original>KSN</original>
    <variation>REG</variation>
    <location>
        <begin position="272"/>
        <end position="274"/>
    </location>
</feature>
<feature type="mutagenesis site" description="Increases cofactor specificity for NADH over NADPH 37 times." evidence="6">
    <original>KSN</original>
    <variation>RSE</variation>
    <location>
        <begin position="272"/>
        <end position="274"/>
    </location>
</feature>
<feature type="mutagenesis site" description="Increases cofactor specificity for NADH over NADPH 13 times." evidence="6">
    <original>KSN</original>
    <variation>RTT</variation>
    <location>
        <begin position="272"/>
        <end position="274"/>
    </location>
</feature>
<feature type="mutagenesis site" description="Increases cofactor specificity for NADH over NADPH 50 times.">
    <original>K</original>
    <variation>R</variation>
    <location>
        <position position="272"/>
    </location>
</feature>
<comment type="function">
    <text evidence="2 3 4 5 6">Reduces D-xylose into xylitol. Preferentially utilizes NADPH as a cosubstrate.</text>
</comment>
<comment type="catalytic activity">
    <reaction>
        <text>xylitol + NAD(+) = D-xylose + NADH + H(+)</text>
        <dbReference type="Rhea" id="RHEA:27441"/>
        <dbReference type="ChEBI" id="CHEBI:15378"/>
        <dbReference type="ChEBI" id="CHEBI:17151"/>
        <dbReference type="ChEBI" id="CHEBI:53455"/>
        <dbReference type="ChEBI" id="CHEBI:57540"/>
        <dbReference type="ChEBI" id="CHEBI:57945"/>
        <dbReference type="EC" id="1.1.1.307"/>
    </reaction>
</comment>
<comment type="catalytic activity">
    <reaction>
        <text>xylitol + NADP(+) = D-xylose + NADPH + H(+)</text>
        <dbReference type="Rhea" id="RHEA:27445"/>
        <dbReference type="ChEBI" id="CHEBI:15378"/>
        <dbReference type="ChEBI" id="CHEBI:17151"/>
        <dbReference type="ChEBI" id="CHEBI:53455"/>
        <dbReference type="ChEBI" id="CHEBI:57783"/>
        <dbReference type="ChEBI" id="CHEBI:58349"/>
        <dbReference type="EC" id="1.1.1.307"/>
    </reaction>
</comment>
<comment type="biophysicochemical properties">
    <kinetics>
        <KM evidence="6">307 uM for NADPH</KM>
        <Vmax evidence="6">152.0 nmol/min/mg enzyme (in the presence of NADPH)</Vmax>
        <text>Mutations at positions 272 to 274 modify the cofactor specificity and increase specificity for NADH over NADPH.</text>
    </kinetics>
</comment>
<comment type="pathway">
    <text>Carbohydrate metabolism; D-xylose degradation.</text>
</comment>
<comment type="domain">
    <text evidence="6">The Lys-Ser-Asn motif at positions 272 to 274 is important for the cofactor specificity for NADPH over NADH.</text>
</comment>
<comment type="similarity">
    <text evidence="7">Belongs to the aldo/keto reductase family.</text>
</comment>
<keyword id="KW-0119">Carbohydrate metabolism</keyword>
<keyword id="KW-0520">NAD</keyword>
<keyword id="KW-0521">NADP</keyword>
<keyword id="KW-0560">Oxidoreductase</keyword>
<keyword id="KW-0859">Xylose metabolism</keyword>
<protein>
    <recommendedName>
        <fullName>NADPH-dependent D-xylose reductase</fullName>
        <shortName>XR</shortName>
        <ecNumber>1.1.1.307</ecNumber>
    </recommendedName>
</protein>
<accession>Q8X195</accession>
<sequence>MSSPLLTLNNGLKMPQIGFGCWKVDNATCAETIYEAIKVGYRLFDGAMDYGNEKEVGEGVNKAIKDGLVKREELFIVSKLWNNFHHPDSVKLAIKKVLSDLNLEYIDLFYMHFPIAQKFVPIEKKYPPNFYCGDGDKWSFEDVPLLTTWRAMEELVEEGLVKSIGISNFVGALIQDLLRGCKIRPAVLEIEHHPYLVQPRLIEYAKTEGIHVTAYSSFGPQSFVELDHPKVKDCTTLFKHETITSIASAHDVPPAKVLLRWATQRGLAVIPKSNKKERLLGNLKINDFDLTEAELEKIEALDIGLRFNDPWTWGYNIPTFI</sequence>
<reference key="1">
    <citation type="journal article" date="2003" name="Appl. Biochem. Biotechnol.">
        <title>Molecular characterization of a gene for aldose reductase (CbXYL1) from Candida boidinii and its expression in Saccharomyces cerevisiae.</title>
        <authorList>
            <person name="Kang M.H."/>
            <person name="Ni H."/>
            <person name="Jeffries T.W."/>
        </authorList>
    </citation>
    <scope>NUCLEOTIDE SEQUENCE [GENOMIC DNA]</scope>
    <scope>FUNCTION</scope>
    <scope>SUBSTRATE SPECIFICITY</scope>
    <source>
        <strain>NRRL Y-17213</strain>
    </source>
</reference>
<reference key="2">
    <citation type="journal article" date="2006" name="Biotechnol. Bioeng.">
        <title>Engineering Escherichia coli for xylitol production from glucose-xylose mixtures.</title>
        <authorList>
            <person name="Cirino P.C."/>
            <person name="Chin J.W."/>
            <person name="Ingram L.O."/>
        </authorList>
    </citation>
    <scope>NUCLEOTIDE SEQUENCE [GENOMIC DNA]</scope>
    <scope>FUNCTION</scope>
    <source>
        <strain>NRRL Y-17213</strain>
    </source>
</reference>
<reference key="3">
    <citation type="journal article" date="2008" name="J. Biotechnol.">
        <title>Role of xylose transporters in xylitol production from engineered Escherichia coli.</title>
        <authorList>
            <person name="Khankal R."/>
            <person name="Chin J.W."/>
            <person name="Cirino P.C."/>
        </authorList>
    </citation>
    <scope>FUNCTION</scope>
</reference>
<reference key="4">
    <citation type="journal article" date="2009" name="Biotechnol. Bioeng.">
        <title>Analysis of NADPH supply during xylitol production by engineered Escherichia coli.</title>
        <authorList>
            <person name="Chin J.W."/>
            <person name="Khankal R."/>
            <person name="Monroe C.A."/>
            <person name="Maranas C.D."/>
            <person name="Cirino P.C."/>
        </authorList>
    </citation>
    <scope>FUNCTION</scope>
</reference>
<reference key="5">
    <citation type="journal article" date="2009" name="Protein Sci.">
        <title>Computational design of Candida boidinii xylose reductase for altered cofactor specificity.</title>
        <authorList>
            <person name="Khoury G.A."/>
            <person name="Fazelinia H."/>
            <person name="Chin J.W."/>
            <person name="Pantazes R.J."/>
            <person name="Cirino P.C."/>
            <person name="Maranas C.D."/>
        </authorList>
    </citation>
    <scope>FUNCTION</scope>
    <scope>BIOPHYSICOCHEMICAL PROPERTIES</scope>
    <scope>SUBSTRATE SPECIFICITY</scope>
    <scope>DOMAIN</scope>
    <scope>MUTAGENESIS OF 272-LYS--ASN-274</scope>
</reference>
<name>XYL1_CANBO</name>
<dbReference type="EC" id="1.1.1.307"/>
<dbReference type="EMBL" id="AF451326">
    <property type="protein sequence ID" value="AAL47846.2"/>
    <property type="molecule type" value="Genomic_DNA"/>
</dbReference>
<dbReference type="SMR" id="Q8X195"/>
<dbReference type="OrthoDB" id="416253at2759"/>
<dbReference type="BRENDA" id="1.1.1.307">
    <property type="organism ID" value="1100"/>
</dbReference>
<dbReference type="UniPathway" id="UPA00810"/>
<dbReference type="GO" id="GO:0032866">
    <property type="term" value="F:D-xylose reductase (NADPH) activity"/>
    <property type="evidence" value="ECO:0007669"/>
    <property type="project" value="InterPro"/>
</dbReference>
<dbReference type="GO" id="GO:0042843">
    <property type="term" value="P:D-xylose catabolic process"/>
    <property type="evidence" value="ECO:0007669"/>
    <property type="project" value="UniProtKB-UniPathway"/>
</dbReference>
<dbReference type="CDD" id="cd19113">
    <property type="entry name" value="AKR_AKR2B1-10"/>
    <property type="match status" value="1"/>
</dbReference>
<dbReference type="FunFam" id="3.20.20.100:FF:000007">
    <property type="entry name" value="NAD(P)H-dependent D-xylose reductase xyl1"/>
    <property type="match status" value="1"/>
</dbReference>
<dbReference type="Gene3D" id="3.20.20.100">
    <property type="entry name" value="NADP-dependent oxidoreductase domain"/>
    <property type="match status" value="1"/>
</dbReference>
<dbReference type="InterPro" id="IPR020471">
    <property type="entry name" value="AKR"/>
</dbReference>
<dbReference type="InterPro" id="IPR044486">
    <property type="entry name" value="AKR2B1"/>
</dbReference>
<dbReference type="InterPro" id="IPR018170">
    <property type="entry name" value="Aldo/ket_reductase_CS"/>
</dbReference>
<dbReference type="InterPro" id="IPR023210">
    <property type="entry name" value="NADP_OxRdtase_dom"/>
</dbReference>
<dbReference type="InterPro" id="IPR036812">
    <property type="entry name" value="NADP_OxRdtase_dom_sf"/>
</dbReference>
<dbReference type="PANTHER" id="PTHR11732">
    <property type="entry name" value="ALDO/KETO REDUCTASE"/>
    <property type="match status" value="1"/>
</dbReference>
<dbReference type="Pfam" id="PF00248">
    <property type="entry name" value="Aldo_ket_red"/>
    <property type="match status" value="1"/>
</dbReference>
<dbReference type="PIRSF" id="PIRSF000097">
    <property type="entry name" value="AKR"/>
    <property type="match status" value="1"/>
</dbReference>
<dbReference type="PRINTS" id="PR00069">
    <property type="entry name" value="ALDKETRDTASE"/>
</dbReference>
<dbReference type="SUPFAM" id="SSF51430">
    <property type="entry name" value="NAD(P)-linked oxidoreductase"/>
    <property type="match status" value="1"/>
</dbReference>
<dbReference type="PROSITE" id="PS00798">
    <property type="entry name" value="ALDOKETO_REDUCTASE_1"/>
    <property type="match status" value="1"/>
</dbReference>
<dbReference type="PROSITE" id="PS00062">
    <property type="entry name" value="ALDOKETO_REDUCTASE_2"/>
    <property type="match status" value="1"/>
</dbReference>
<dbReference type="PROSITE" id="PS00063">
    <property type="entry name" value="ALDOKETO_REDUCTASE_3"/>
    <property type="match status" value="1"/>
</dbReference>
<gene>
    <name type="primary">XYL1</name>
    <name type="synonym">cbXR</name>
</gene>